<dbReference type="EC" id="2.4.2.1" evidence="2"/>
<dbReference type="EMBL" id="AE014299">
    <property type="protein sequence ID" value="AAN54289.1"/>
    <property type="molecule type" value="Genomic_DNA"/>
</dbReference>
<dbReference type="RefSeq" id="NP_716844.1">
    <property type="nucleotide sequence ID" value="NC_004347.2"/>
</dbReference>
<dbReference type="SMR" id="Q8EHK0"/>
<dbReference type="STRING" id="211586.SO_1221"/>
<dbReference type="PaxDb" id="211586-SO_1221"/>
<dbReference type="KEGG" id="son:SO_1221"/>
<dbReference type="PATRIC" id="fig|211586.12.peg.1172"/>
<dbReference type="eggNOG" id="COG0813">
    <property type="taxonomic scope" value="Bacteria"/>
</dbReference>
<dbReference type="HOGENOM" id="CLU_068457_2_0_6"/>
<dbReference type="OrthoDB" id="9782889at2"/>
<dbReference type="PhylomeDB" id="Q8EHK0"/>
<dbReference type="BioCyc" id="SONE211586:G1GMP-1131-MONOMER"/>
<dbReference type="Proteomes" id="UP000008186">
    <property type="component" value="Chromosome"/>
</dbReference>
<dbReference type="GO" id="GO:0005829">
    <property type="term" value="C:cytosol"/>
    <property type="evidence" value="ECO:0000318"/>
    <property type="project" value="GO_Central"/>
</dbReference>
<dbReference type="GO" id="GO:0004731">
    <property type="term" value="F:purine-nucleoside phosphorylase activity"/>
    <property type="evidence" value="ECO:0000318"/>
    <property type="project" value="GO_Central"/>
</dbReference>
<dbReference type="GO" id="GO:0006152">
    <property type="term" value="P:purine nucleoside catabolic process"/>
    <property type="evidence" value="ECO:0000318"/>
    <property type="project" value="GO_Central"/>
</dbReference>
<dbReference type="CDD" id="cd09006">
    <property type="entry name" value="PNP_EcPNPI-like"/>
    <property type="match status" value="1"/>
</dbReference>
<dbReference type="Gene3D" id="3.40.50.1580">
    <property type="entry name" value="Nucleoside phosphorylase domain"/>
    <property type="match status" value="1"/>
</dbReference>
<dbReference type="HAMAP" id="MF_01627">
    <property type="entry name" value="Pur_nucleosid_phosp"/>
    <property type="match status" value="1"/>
</dbReference>
<dbReference type="InterPro" id="IPR004402">
    <property type="entry name" value="DeoD-type"/>
</dbReference>
<dbReference type="InterPro" id="IPR018016">
    <property type="entry name" value="Nucleoside_phosphorylase_CS"/>
</dbReference>
<dbReference type="InterPro" id="IPR000845">
    <property type="entry name" value="Nucleoside_phosphorylase_d"/>
</dbReference>
<dbReference type="InterPro" id="IPR035994">
    <property type="entry name" value="Nucleoside_phosphorylase_sf"/>
</dbReference>
<dbReference type="NCBIfam" id="TIGR00107">
    <property type="entry name" value="deoD"/>
    <property type="match status" value="1"/>
</dbReference>
<dbReference type="NCBIfam" id="NF004489">
    <property type="entry name" value="PRK05819.1"/>
    <property type="match status" value="1"/>
</dbReference>
<dbReference type="NCBIfam" id="NF009914">
    <property type="entry name" value="PRK13374.1"/>
    <property type="match status" value="1"/>
</dbReference>
<dbReference type="PANTHER" id="PTHR43691:SF2">
    <property type="entry name" value="PURINE NUCLEOSIDE PHOSPHORYLASE DEOD-TYPE"/>
    <property type="match status" value="1"/>
</dbReference>
<dbReference type="PANTHER" id="PTHR43691">
    <property type="entry name" value="URIDINE PHOSPHORYLASE"/>
    <property type="match status" value="1"/>
</dbReference>
<dbReference type="Pfam" id="PF01048">
    <property type="entry name" value="PNP_UDP_1"/>
    <property type="match status" value="1"/>
</dbReference>
<dbReference type="SUPFAM" id="SSF53167">
    <property type="entry name" value="Purine and uridine phosphorylases"/>
    <property type="match status" value="1"/>
</dbReference>
<dbReference type="PROSITE" id="PS01232">
    <property type="entry name" value="PNP_UDP_1"/>
    <property type="match status" value="1"/>
</dbReference>
<feature type="chain" id="PRO_0000063160" description="Purine nucleoside phosphorylase DeoD-type 2">
    <location>
        <begin position="1"/>
        <end position="236"/>
    </location>
</feature>
<feature type="active site" description="Proton donor" evidence="2">
    <location>
        <position position="205"/>
    </location>
</feature>
<feature type="binding site" evidence="1">
    <location>
        <position position="5"/>
    </location>
    <ligand>
        <name>a purine D-ribonucleoside</name>
        <dbReference type="ChEBI" id="CHEBI:142355"/>
        <note>ligand shared between dimeric partners</note>
    </ligand>
</feature>
<feature type="binding site" description="in other chain" evidence="1">
    <location>
        <position position="21"/>
    </location>
    <ligand>
        <name>phosphate</name>
        <dbReference type="ChEBI" id="CHEBI:43474"/>
        <note>ligand shared between dimeric partners</note>
    </ligand>
</feature>
<feature type="binding site" description="in other chain" evidence="1">
    <location>
        <position position="25"/>
    </location>
    <ligand>
        <name>phosphate</name>
        <dbReference type="ChEBI" id="CHEBI:43474"/>
        <note>ligand shared between dimeric partners</note>
    </ligand>
</feature>
<feature type="binding site" evidence="1">
    <location>
        <position position="44"/>
    </location>
    <ligand>
        <name>phosphate</name>
        <dbReference type="ChEBI" id="CHEBI:43474"/>
        <note>ligand shared between dimeric partners</note>
    </ligand>
</feature>
<feature type="binding site" description="in other chain" evidence="1">
    <location>
        <begin position="88"/>
        <end position="91"/>
    </location>
    <ligand>
        <name>phosphate</name>
        <dbReference type="ChEBI" id="CHEBI:43474"/>
        <note>ligand shared between dimeric partners</note>
    </ligand>
</feature>
<feature type="binding site" description="in other chain" evidence="1">
    <location>
        <begin position="180"/>
        <end position="182"/>
    </location>
    <ligand>
        <name>a purine D-ribonucleoside</name>
        <dbReference type="ChEBI" id="CHEBI:142355"/>
        <note>ligand shared between dimeric partners</note>
    </ligand>
</feature>
<feature type="binding site" description="in other chain" evidence="1">
    <location>
        <begin position="204"/>
        <end position="205"/>
    </location>
    <ligand>
        <name>a purine D-ribonucleoside</name>
        <dbReference type="ChEBI" id="CHEBI:142355"/>
        <note>ligand shared between dimeric partners</note>
    </ligand>
</feature>
<feature type="site" description="Important for catalytic activity" evidence="2">
    <location>
        <position position="218"/>
    </location>
</feature>
<keyword id="KW-0328">Glycosyltransferase</keyword>
<keyword id="KW-1185">Reference proteome</keyword>
<keyword id="KW-0808">Transferase</keyword>
<sequence>MATPHINAVEGAFAETVLFPGDPLRAKYIAETFLENVEQVTDVRNMLGFTGTYKGKRISVMGSGMGIPSCSIYATELIKDYGVKNLIRVGTCGAISTDVKVRDVIIGMGACTDSQVNRLRFKGQDFAAIANYELMNAVIESAKVKGTKIRVGNVFSADLFYTPDPQMFDVMEKMGVLGVEMEAAGLYGVAHEFGARALCVVTVSDHIRTGEKTTSEERQTTFNDMIVMTLDAAITL</sequence>
<accession>Q8EHK0</accession>
<name>DEOD2_SHEON</name>
<organism>
    <name type="scientific">Shewanella oneidensis (strain ATCC 700550 / JCM 31522 / CIP 106686 / LMG 19005 / NCIMB 14063 / MR-1)</name>
    <dbReference type="NCBI Taxonomy" id="211586"/>
    <lineage>
        <taxon>Bacteria</taxon>
        <taxon>Pseudomonadati</taxon>
        <taxon>Pseudomonadota</taxon>
        <taxon>Gammaproteobacteria</taxon>
        <taxon>Alteromonadales</taxon>
        <taxon>Shewanellaceae</taxon>
        <taxon>Shewanella</taxon>
    </lineage>
</organism>
<comment type="function">
    <text evidence="2">Catalyzes the reversible phosphorolytic breakdown of the N-glycosidic bond in the beta-(deoxy)ribonucleoside molecules, with the formation of the corresponding free purine bases and pentose-1-phosphate.</text>
</comment>
<comment type="catalytic activity">
    <reaction evidence="2">
        <text>a purine D-ribonucleoside + phosphate = a purine nucleobase + alpha-D-ribose 1-phosphate</text>
        <dbReference type="Rhea" id="RHEA:19805"/>
        <dbReference type="ChEBI" id="CHEBI:26386"/>
        <dbReference type="ChEBI" id="CHEBI:43474"/>
        <dbReference type="ChEBI" id="CHEBI:57720"/>
        <dbReference type="ChEBI" id="CHEBI:142355"/>
        <dbReference type="EC" id="2.4.2.1"/>
    </reaction>
</comment>
<comment type="catalytic activity">
    <reaction evidence="2">
        <text>a purine 2'-deoxy-D-ribonucleoside + phosphate = a purine nucleobase + 2-deoxy-alpha-D-ribose 1-phosphate</text>
        <dbReference type="Rhea" id="RHEA:36431"/>
        <dbReference type="ChEBI" id="CHEBI:26386"/>
        <dbReference type="ChEBI" id="CHEBI:43474"/>
        <dbReference type="ChEBI" id="CHEBI:57259"/>
        <dbReference type="ChEBI" id="CHEBI:142361"/>
        <dbReference type="EC" id="2.4.2.1"/>
    </reaction>
</comment>
<comment type="subunit">
    <text evidence="2">Homohexamer; trimer of homodimers.</text>
</comment>
<comment type="similarity">
    <text evidence="2">Belongs to the PNP/UDP phosphorylase family.</text>
</comment>
<evidence type="ECO:0000250" key="1">
    <source>
        <dbReference type="UniProtKB" id="P50389"/>
    </source>
</evidence>
<evidence type="ECO:0000255" key="2">
    <source>
        <dbReference type="HAMAP-Rule" id="MF_01627"/>
    </source>
</evidence>
<reference key="1">
    <citation type="journal article" date="2002" name="Nat. Biotechnol.">
        <title>Genome sequence of the dissimilatory metal ion-reducing bacterium Shewanella oneidensis.</title>
        <authorList>
            <person name="Heidelberg J.F."/>
            <person name="Paulsen I.T."/>
            <person name="Nelson K.E."/>
            <person name="Gaidos E.J."/>
            <person name="Nelson W.C."/>
            <person name="Read T.D."/>
            <person name="Eisen J.A."/>
            <person name="Seshadri R."/>
            <person name="Ward N.L."/>
            <person name="Methe B.A."/>
            <person name="Clayton R.A."/>
            <person name="Meyer T."/>
            <person name="Tsapin A."/>
            <person name="Scott J."/>
            <person name="Beanan M.J."/>
            <person name="Brinkac L.M."/>
            <person name="Daugherty S.C."/>
            <person name="DeBoy R.T."/>
            <person name="Dodson R.J."/>
            <person name="Durkin A.S."/>
            <person name="Haft D.H."/>
            <person name="Kolonay J.F."/>
            <person name="Madupu R."/>
            <person name="Peterson J.D."/>
            <person name="Umayam L.A."/>
            <person name="White O."/>
            <person name="Wolf A.M."/>
            <person name="Vamathevan J.J."/>
            <person name="Weidman J.F."/>
            <person name="Impraim M."/>
            <person name="Lee K."/>
            <person name="Berry K.J."/>
            <person name="Lee C."/>
            <person name="Mueller J."/>
            <person name="Khouri H.M."/>
            <person name="Gill J."/>
            <person name="Utterback T.R."/>
            <person name="McDonald L.A."/>
            <person name="Feldblyum T.V."/>
            <person name="Smith H.O."/>
            <person name="Venter J.C."/>
            <person name="Nealson K.H."/>
            <person name="Fraser C.M."/>
        </authorList>
    </citation>
    <scope>NUCLEOTIDE SEQUENCE [LARGE SCALE GENOMIC DNA]</scope>
    <source>
        <strain>ATCC 700550 / JCM 31522 / CIP 106686 / LMG 19005 / NCIMB 14063 / MR-1</strain>
    </source>
</reference>
<gene>
    <name evidence="2" type="primary">deoD2</name>
    <name type="ordered locus">SO_1221</name>
</gene>
<proteinExistence type="inferred from homology"/>
<protein>
    <recommendedName>
        <fullName evidence="2">Purine nucleoside phosphorylase DeoD-type 2</fullName>
        <shortName evidence="2">PNP 2</shortName>
        <ecNumber evidence="2">2.4.2.1</ecNumber>
    </recommendedName>
</protein>